<reference key="1">
    <citation type="journal article" date="1985" name="EMBO J.">
        <title>Histone gene organization of fission yeast: a common upstream sequence.</title>
        <authorList>
            <person name="Matsumoto S."/>
            <person name="Yanagida M."/>
        </authorList>
    </citation>
    <scope>NUCLEOTIDE SEQUENCE [GENOMIC DNA]</scope>
</reference>
<reference key="2">
    <citation type="journal article" date="2000" name="Yeast">
        <title>A 38 kb segment containing the cdc2 gene from the left arm of fission yeast chromosome II: sequence analysis and characterization of the genomic DNA and cDNAs encoded on the segment.</title>
        <authorList>
            <person name="Machida M."/>
            <person name="Yamazaki S."/>
            <person name="Kunihiro S."/>
            <person name="Tanaka T."/>
            <person name="Kushida N."/>
            <person name="Jinno K."/>
            <person name="Haikawa Y."/>
            <person name="Yamazaki J."/>
            <person name="Yamamoto S."/>
            <person name="Sekine M."/>
            <person name="Oguchi A."/>
            <person name="Nagai Y."/>
            <person name="Sakai M."/>
            <person name="Aoki K."/>
            <person name="Ogura K."/>
            <person name="Kudoh Y."/>
            <person name="Kikuchi H."/>
            <person name="Zhang M.Q."/>
            <person name="Yanagida M."/>
        </authorList>
    </citation>
    <scope>NUCLEOTIDE SEQUENCE [LARGE SCALE GENOMIC DNA] (HHT2)</scope>
    <source>
        <strain>972 / ATCC 24843</strain>
    </source>
</reference>
<reference key="3">
    <citation type="journal article" date="2002" name="Nature">
        <title>The genome sequence of Schizosaccharomyces pombe.</title>
        <authorList>
            <person name="Wood V."/>
            <person name="Gwilliam R."/>
            <person name="Rajandream M.A."/>
            <person name="Lyne M.H."/>
            <person name="Lyne R."/>
            <person name="Stewart A."/>
            <person name="Sgouros J.G."/>
            <person name="Peat N."/>
            <person name="Hayles J."/>
            <person name="Baker S.G."/>
            <person name="Basham D."/>
            <person name="Bowman S."/>
            <person name="Brooks K."/>
            <person name="Brown D."/>
            <person name="Brown S."/>
            <person name="Chillingworth T."/>
            <person name="Churcher C.M."/>
            <person name="Collins M."/>
            <person name="Connor R."/>
            <person name="Cronin A."/>
            <person name="Davis P."/>
            <person name="Feltwell T."/>
            <person name="Fraser A."/>
            <person name="Gentles S."/>
            <person name="Goble A."/>
            <person name="Hamlin N."/>
            <person name="Harris D.E."/>
            <person name="Hidalgo J."/>
            <person name="Hodgson G."/>
            <person name="Holroyd S."/>
            <person name="Hornsby T."/>
            <person name="Howarth S."/>
            <person name="Huckle E.J."/>
            <person name="Hunt S."/>
            <person name="Jagels K."/>
            <person name="James K.D."/>
            <person name="Jones L."/>
            <person name="Jones M."/>
            <person name="Leather S."/>
            <person name="McDonald S."/>
            <person name="McLean J."/>
            <person name="Mooney P."/>
            <person name="Moule S."/>
            <person name="Mungall K.L."/>
            <person name="Murphy L.D."/>
            <person name="Niblett D."/>
            <person name="Odell C."/>
            <person name="Oliver K."/>
            <person name="O'Neil S."/>
            <person name="Pearson D."/>
            <person name="Quail M.A."/>
            <person name="Rabbinowitsch E."/>
            <person name="Rutherford K.M."/>
            <person name="Rutter S."/>
            <person name="Saunders D."/>
            <person name="Seeger K."/>
            <person name="Sharp S."/>
            <person name="Skelton J."/>
            <person name="Simmonds M.N."/>
            <person name="Squares R."/>
            <person name="Squares S."/>
            <person name="Stevens K."/>
            <person name="Taylor K."/>
            <person name="Taylor R.G."/>
            <person name="Tivey A."/>
            <person name="Walsh S.V."/>
            <person name="Warren T."/>
            <person name="Whitehead S."/>
            <person name="Woodward J.R."/>
            <person name="Volckaert G."/>
            <person name="Aert R."/>
            <person name="Robben J."/>
            <person name="Grymonprez B."/>
            <person name="Weltjens I."/>
            <person name="Vanstreels E."/>
            <person name="Rieger M."/>
            <person name="Schaefer M."/>
            <person name="Mueller-Auer S."/>
            <person name="Gabel C."/>
            <person name="Fuchs M."/>
            <person name="Duesterhoeft A."/>
            <person name="Fritzc C."/>
            <person name="Holzer E."/>
            <person name="Moestl D."/>
            <person name="Hilbert H."/>
            <person name="Borzym K."/>
            <person name="Langer I."/>
            <person name="Beck A."/>
            <person name="Lehrach H."/>
            <person name="Reinhardt R."/>
            <person name="Pohl T.M."/>
            <person name="Eger P."/>
            <person name="Zimmermann W."/>
            <person name="Wedler H."/>
            <person name="Wambutt R."/>
            <person name="Purnelle B."/>
            <person name="Goffeau A."/>
            <person name="Cadieu E."/>
            <person name="Dreano S."/>
            <person name="Gloux S."/>
            <person name="Lelaure V."/>
            <person name="Mottier S."/>
            <person name="Galibert F."/>
            <person name="Aves S.J."/>
            <person name="Xiang Z."/>
            <person name="Hunt C."/>
            <person name="Moore K."/>
            <person name="Hurst S.M."/>
            <person name="Lucas M."/>
            <person name="Rochet M."/>
            <person name="Gaillardin C."/>
            <person name="Tallada V.A."/>
            <person name="Garzon A."/>
            <person name="Thode G."/>
            <person name="Daga R.R."/>
            <person name="Cruzado L."/>
            <person name="Jimenez J."/>
            <person name="Sanchez M."/>
            <person name="del Rey F."/>
            <person name="Benito J."/>
            <person name="Dominguez A."/>
            <person name="Revuelta J.L."/>
            <person name="Moreno S."/>
            <person name="Armstrong J."/>
            <person name="Forsburg S.L."/>
            <person name="Cerutti L."/>
            <person name="Lowe T."/>
            <person name="McCombie W.R."/>
            <person name="Paulsen I."/>
            <person name="Potashkin J."/>
            <person name="Shpakovski G.V."/>
            <person name="Ussery D."/>
            <person name="Barrell B.G."/>
            <person name="Nurse P."/>
        </authorList>
    </citation>
    <scope>NUCLEOTIDE SEQUENCE [LARGE SCALE GENOMIC DNA] (HHT1 AND HHT2)</scope>
    <source>
        <strain>972 / ATCC 24843</strain>
    </source>
</reference>
<reference key="4">
    <citation type="journal article" date="2001" name="Science">
        <title>Role of histone H3 lysine 9 methylation in epigenetic control of heterochromatin assembly.</title>
        <authorList>
            <person name="Nakayama J."/>
            <person name="Rice J.C."/>
            <person name="Strahl B.D."/>
            <person name="Allis C.D."/>
            <person name="Grewal S.I.S."/>
        </authorList>
    </citation>
    <scope>METHYLATION AT LYS-10</scope>
</reference>
<reference key="5">
    <citation type="journal article" date="2005" name="Eukaryot. Cell">
        <title>Histone H3 K36 methylation is associated with transcription elongation in Schizosaccharomyces pombe.</title>
        <authorList>
            <person name="Morris S.A."/>
            <person name="Shibata Y."/>
            <person name="Noma K."/>
            <person name="Tsukamoto Y."/>
            <person name="Warren E."/>
            <person name="Temple B."/>
            <person name="Grewal S.I.S."/>
            <person name="Strahl B.D."/>
        </authorList>
    </citation>
    <scope>METHYLATION AT LYS-37</scope>
</reference>
<dbReference type="EMBL" id="X05222">
    <property type="protein sequence ID" value="CAA28851.1"/>
    <property type="molecule type" value="Genomic_DNA"/>
</dbReference>
<dbReference type="EMBL" id="X05223">
    <property type="protein sequence ID" value="CAA28852.1"/>
    <property type="molecule type" value="Genomic_DNA"/>
</dbReference>
<dbReference type="EMBL" id="AB004538">
    <property type="protein sequence ID" value="BAA21441.1"/>
    <property type="molecule type" value="Genomic_DNA"/>
</dbReference>
<dbReference type="EMBL" id="CU329670">
    <property type="protein sequence ID" value="CAB75772.1"/>
    <property type="molecule type" value="Genomic_DNA"/>
</dbReference>
<dbReference type="EMBL" id="CU329671">
    <property type="protein sequence ID" value="CAA17819.1"/>
    <property type="molecule type" value="Genomic_DNA"/>
</dbReference>
<dbReference type="PIR" id="E27399">
    <property type="entry name" value="HSZP3"/>
</dbReference>
<dbReference type="RefSeq" id="NP_594683.1">
    <property type="nucleotide sequence ID" value="NM_001020112.2"/>
</dbReference>
<dbReference type="RefSeq" id="NP_595567.1">
    <property type="nucleotide sequence ID" value="NM_001021462.2"/>
</dbReference>
<dbReference type="PDB" id="2DZE">
    <property type="method" value="X-ray"/>
    <property type="resolution" value="1.80 A"/>
    <property type="chains" value="X=123-132"/>
</dbReference>
<dbReference type="PDB" id="3G7L">
    <property type="method" value="X-ray"/>
    <property type="resolution" value="2.20 A"/>
    <property type="chains" value="P=2-17"/>
</dbReference>
<dbReference type="PDBsum" id="2DZE"/>
<dbReference type="PDBsum" id="3G7L"/>
<dbReference type="SMR" id="P09988"/>
<dbReference type="BioGRID" id="276354">
    <property type="interactions" value="39"/>
</dbReference>
<dbReference type="BioGRID" id="277734">
    <property type="interactions" value="48"/>
</dbReference>
<dbReference type="BioGRID" id="278928">
    <property type="interactions" value="50"/>
</dbReference>
<dbReference type="FunCoup" id="P09988">
    <property type="interactions" value="713"/>
</dbReference>
<dbReference type="IntAct" id="P09988">
    <property type="interactions" value="1"/>
</dbReference>
<dbReference type="MINT" id="P09988"/>
<dbReference type="STRING" id="284812.P09988"/>
<dbReference type="iPTMnet" id="P09988"/>
<dbReference type="PaxDb" id="4896-SPAC1834.04.1"/>
<dbReference type="EnsemblFungi" id="SPAC1834.04.1">
    <property type="protein sequence ID" value="SPAC1834.04.1:pep"/>
    <property type="gene ID" value="SPAC1834.04"/>
</dbReference>
<dbReference type="EnsemblFungi" id="SPBC1105.11c.1">
    <property type="protein sequence ID" value="SPBC1105.11c.1:pep"/>
    <property type="gene ID" value="SPBC1105.11c"/>
</dbReference>
<dbReference type="EnsemblFungi" id="SPBC8D2.04.1">
    <property type="protein sequence ID" value="SPBC8D2.04.1:pep"/>
    <property type="gene ID" value="SPBC8D2.04"/>
</dbReference>
<dbReference type="GeneID" id="2541220"/>
<dbReference type="GeneID" id="2542467"/>
<dbReference type="KEGG" id="spo:2539804"/>
<dbReference type="KEGG" id="spo:2541220"/>
<dbReference type="KEGG" id="spo:2542467"/>
<dbReference type="PomBase" id="SPAC1834.04">
    <property type="gene designation" value="hht1"/>
</dbReference>
<dbReference type="PomBase" id="SPBC8D2.04">
    <property type="gene designation" value="hht2"/>
</dbReference>
<dbReference type="VEuPathDB" id="FungiDB:SPAC1834.04"/>
<dbReference type="VEuPathDB" id="FungiDB:SPBC1105.11c"/>
<dbReference type="VEuPathDB" id="FungiDB:SPBC8D2.04"/>
<dbReference type="eggNOG" id="KOG1745">
    <property type="taxonomic scope" value="Eukaryota"/>
</dbReference>
<dbReference type="HOGENOM" id="CLU_078295_4_0_1"/>
<dbReference type="InParanoid" id="P09988"/>
<dbReference type="OMA" id="HIFAEMA"/>
<dbReference type="PhylomeDB" id="P09988"/>
<dbReference type="Reactome" id="R-SPO-2299718">
    <property type="pathway name" value="Condensation of Prophase Chromosomes"/>
</dbReference>
<dbReference type="Reactome" id="R-SPO-2559580">
    <property type="pathway name" value="Oxidative Stress Induced Senescence"/>
</dbReference>
<dbReference type="Reactome" id="R-SPO-427359">
    <property type="pathway name" value="SIRT1 negatively regulates rRNA expression"/>
</dbReference>
<dbReference type="Reactome" id="R-SPO-5578749">
    <property type="pathway name" value="Transcriptional regulation by small RNAs"/>
</dbReference>
<dbReference type="Reactome" id="R-SPO-5625886">
    <property type="pathway name" value="Activated PKN1 stimulates transcription of AR (androgen receptor) regulated genes KLK2 and KLK3"/>
</dbReference>
<dbReference type="Reactome" id="R-SPO-68616">
    <property type="pathway name" value="Assembly of the ORC complex at the origin of replication"/>
</dbReference>
<dbReference type="Reactome" id="R-SPO-73772">
    <property type="pathway name" value="RNA Polymerase I Promoter Escape"/>
</dbReference>
<dbReference type="Reactome" id="R-SPO-9018519">
    <property type="pathway name" value="Estrogen-dependent gene expression"/>
</dbReference>
<dbReference type="Reactome" id="R-SPO-983231">
    <property type="pathway name" value="Factors involved in megakaryocyte development and platelet production"/>
</dbReference>
<dbReference type="EvolutionaryTrace" id="P09988"/>
<dbReference type="PRO" id="PR:P09988"/>
<dbReference type="Proteomes" id="UP000002485">
    <property type="component" value="Chromosome I"/>
</dbReference>
<dbReference type="Proteomes" id="UP000002485">
    <property type="component" value="Chromosome II"/>
</dbReference>
<dbReference type="ExpressionAtlas" id="P09988">
    <property type="expression patterns" value="differential"/>
</dbReference>
<dbReference type="GO" id="GO:0000792">
    <property type="term" value="C:heterochromatin"/>
    <property type="evidence" value="ECO:0000314"/>
    <property type="project" value="PomBase"/>
</dbReference>
<dbReference type="GO" id="GO:0031934">
    <property type="term" value="C:mating-type region heterochromatin"/>
    <property type="evidence" value="ECO:0000314"/>
    <property type="project" value="PomBase"/>
</dbReference>
<dbReference type="GO" id="GO:0140602">
    <property type="term" value="C:nucleolar peripheral inclusion body"/>
    <property type="evidence" value="ECO:0000314"/>
    <property type="project" value="PomBase"/>
</dbReference>
<dbReference type="GO" id="GO:0000786">
    <property type="term" value="C:nucleosome"/>
    <property type="evidence" value="ECO:0000255"/>
    <property type="project" value="PomBase"/>
</dbReference>
<dbReference type="GO" id="GO:0005634">
    <property type="term" value="C:nucleus"/>
    <property type="evidence" value="ECO:0000269"/>
    <property type="project" value="PomBase"/>
</dbReference>
<dbReference type="GO" id="GO:0005721">
    <property type="term" value="C:pericentric heterochromatin"/>
    <property type="evidence" value="ECO:0000314"/>
    <property type="project" value="PomBase"/>
</dbReference>
<dbReference type="GO" id="GO:0140720">
    <property type="term" value="C:subtelomeric heterochromatin"/>
    <property type="evidence" value="ECO:0000314"/>
    <property type="project" value="PomBase"/>
</dbReference>
<dbReference type="GO" id="GO:0140463">
    <property type="term" value="F:chromatin-protein adaptor activity"/>
    <property type="evidence" value="ECO:0000353"/>
    <property type="project" value="PomBase"/>
</dbReference>
<dbReference type="GO" id="GO:0003677">
    <property type="term" value="F:DNA binding"/>
    <property type="evidence" value="ECO:0000255"/>
    <property type="project" value="PomBase"/>
</dbReference>
<dbReference type="GO" id="GO:0046982">
    <property type="term" value="F:protein heterodimerization activity"/>
    <property type="evidence" value="ECO:0007669"/>
    <property type="project" value="InterPro"/>
</dbReference>
<dbReference type="GO" id="GO:0030527">
    <property type="term" value="F:structural constituent of chromatin"/>
    <property type="evidence" value="ECO:0000305"/>
    <property type="project" value="PomBase"/>
</dbReference>
<dbReference type="GO" id="GO:0006974">
    <property type="term" value="P:DNA damage response"/>
    <property type="evidence" value="ECO:0000315"/>
    <property type="project" value="PomBase"/>
</dbReference>
<dbReference type="GO" id="GO:0033696">
    <property type="term" value="P:heterochromatin boundary formation"/>
    <property type="evidence" value="ECO:0000315"/>
    <property type="project" value="PomBase"/>
</dbReference>
<dbReference type="GO" id="GO:0031507">
    <property type="term" value="P:heterochromatin formation"/>
    <property type="evidence" value="ECO:0000269"/>
    <property type="project" value="PomBase"/>
</dbReference>
<dbReference type="GO" id="GO:1990758">
    <property type="term" value="P:mitotic sister chromatid biorientation"/>
    <property type="evidence" value="ECO:0000315"/>
    <property type="project" value="PomBase"/>
</dbReference>
<dbReference type="GO" id="GO:0031508">
    <property type="term" value="P:pericentric heterochromatin formation"/>
    <property type="evidence" value="ECO:0000269"/>
    <property type="project" value="PomBase"/>
</dbReference>
<dbReference type="CDD" id="cd22911">
    <property type="entry name" value="HFD_H3"/>
    <property type="match status" value="1"/>
</dbReference>
<dbReference type="FunFam" id="1.10.20.10:FF:000010">
    <property type="entry name" value="Histone H3"/>
    <property type="match status" value="1"/>
</dbReference>
<dbReference type="Gene3D" id="1.10.20.10">
    <property type="entry name" value="Histone, subunit A"/>
    <property type="match status" value="1"/>
</dbReference>
<dbReference type="InterPro" id="IPR009072">
    <property type="entry name" value="Histone-fold"/>
</dbReference>
<dbReference type="InterPro" id="IPR007125">
    <property type="entry name" value="Histone_H2A/H2B/H3"/>
</dbReference>
<dbReference type="InterPro" id="IPR000164">
    <property type="entry name" value="Histone_H3/CENP-A"/>
</dbReference>
<dbReference type="PANTHER" id="PTHR11426">
    <property type="entry name" value="HISTONE H3"/>
    <property type="match status" value="1"/>
</dbReference>
<dbReference type="Pfam" id="PF00125">
    <property type="entry name" value="Histone"/>
    <property type="match status" value="1"/>
</dbReference>
<dbReference type="PRINTS" id="PR00622">
    <property type="entry name" value="HISTONEH3"/>
</dbReference>
<dbReference type="SMART" id="SM00428">
    <property type="entry name" value="H3"/>
    <property type="match status" value="1"/>
</dbReference>
<dbReference type="SUPFAM" id="SSF47113">
    <property type="entry name" value="Histone-fold"/>
    <property type="match status" value="1"/>
</dbReference>
<dbReference type="PROSITE" id="PS00322">
    <property type="entry name" value="HISTONE_H3_1"/>
    <property type="match status" value="1"/>
</dbReference>
<dbReference type="PROSITE" id="PS00959">
    <property type="entry name" value="HISTONE_H3_2"/>
    <property type="match status" value="1"/>
</dbReference>
<evidence type="ECO:0000250" key="1"/>
<evidence type="ECO:0000256" key="2">
    <source>
        <dbReference type="SAM" id="MobiDB-lite"/>
    </source>
</evidence>
<evidence type="ECO:0000269" key="3">
    <source>
    </source>
</evidence>
<evidence type="ECO:0000269" key="4">
    <source>
    </source>
</evidence>
<evidence type="ECO:0000305" key="5"/>
<evidence type="ECO:0007829" key="6">
    <source>
        <dbReference type="PDB" id="2DZE"/>
    </source>
</evidence>
<evidence type="ECO:0007829" key="7">
    <source>
        <dbReference type="PDB" id="3G7L"/>
    </source>
</evidence>
<keyword id="KW-0002">3D-structure</keyword>
<keyword id="KW-0007">Acetylation</keyword>
<keyword id="KW-0158">Chromosome</keyword>
<keyword id="KW-0238">DNA-binding</keyword>
<keyword id="KW-0488">Methylation</keyword>
<keyword id="KW-0544">Nucleosome core</keyword>
<keyword id="KW-0539">Nucleus</keyword>
<keyword id="KW-0597">Phosphoprotein</keyword>
<keyword id="KW-1185">Reference proteome</keyword>
<protein>
    <recommendedName>
        <fullName>Histone H3.1/H3.2</fullName>
    </recommendedName>
</protein>
<feature type="initiator methionine" description="Removed" evidence="1">
    <location>
        <position position="1"/>
    </location>
</feature>
<feature type="chain" id="PRO_0000221366" description="Histone H3.1/H3.2">
    <location>
        <begin position="2"/>
        <end position="136"/>
    </location>
</feature>
<feature type="region of interest" description="Disordered" evidence="2">
    <location>
        <begin position="1"/>
        <end position="42"/>
    </location>
</feature>
<feature type="compositionally biased region" description="Low complexity" evidence="2">
    <location>
        <begin position="19"/>
        <end position="32"/>
    </location>
</feature>
<feature type="modified residue" description="N6,N6,N6-trimethyllysine; alternate" evidence="1">
    <location>
        <position position="5"/>
    </location>
</feature>
<feature type="modified residue" description="N6,N6-dimethyllysine; alternate" evidence="1">
    <location>
        <position position="5"/>
    </location>
</feature>
<feature type="modified residue" description="N6-methyllysine; alternate" evidence="1">
    <location>
        <position position="5"/>
    </location>
</feature>
<feature type="modified residue" description="N6-acetyllysine; alternate" evidence="1">
    <location>
        <position position="10"/>
    </location>
</feature>
<feature type="modified residue" description="N6-methyllysine; alternate" evidence="3">
    <location>
        <position position="10"/>
    </location>
</feature>
<feature type="modified residue" description="Phosphoserine" evidence="1">
    <location>
        <position position="11"/>
    </location>
</feature>
<feature type="modified residue" description="N6,N6-dimethyllysine; alternate" evidence="1">
    <location>
        <position position="15"/>
    </location>
</feature>
<feature type="modified residue" description="N6-acetyllysine; alternate" evidence="1">
    <location>
        <position position="15"/>
    </location>
</feature>
<feature type="modified residue" description="N6-acetyllysine; alternate" evidence="1">
    <location>
        <position position="19"/>
    </location>
</feature>
<feature type="modified residue" description="N6-methyllysine; alternate" evidence="1">
    <location>
        <position position="19"/>
    </location>
</feature>
<feature type="modified residue" description="N6-acetyllysine; alternate" evidence="1">
    <location>
        <position position="24"/>
    </location>
</feature>
<feature type="modified residue" description="N6-methyllysine; alternate" evidence="1">
    <location>
        <position position="24"/>
    </location>
</feature>
<feature type="modified residue" description="N6,N6,N6-trimethyllysine; alternate" evidence="1">
    <location>
        <position position="28"/>
    </location>
</feature>
<feature type="modified residue" description="N6,N6-dimethyllysine; alternate" evidence="1">
    <location>
        <position position="28"/>
    </location>
</feature>
<feature type="modified residue" description="N6-acetyllysine; alternate" evidence="1">
    <location>
        <position position="28"/>
    </location>
</feature>
<feature type="modified residue" description="N6-methyllysine; alternate" evidence="1">
    <location>
        <position position="28"/>
    </location>
</feature>
<feature type="modified residue" description="N6,N6,N6-trimethyllysine; alternate" evidence="1">
    <location>
        <position position="37"/>
    </location>
</feature>
<feature type="modified residue" description="N6,N6-dimethyllysine; alternate" evidence="4">
    <location>
        <position position="37"/>
    </location>
</feature>
<feature type="modified residue" description="N6-acetyllysine; alternate" evidence="1">
    <location>
        <position position="37"/>
    </location>
</feature>
<feature type="modified residue" description="N6-methyllysine; alternate" evidence="1">
    <location>
        <position position="37"/>
    </location>
</feature>
<feature type="modified residue" description="N6-acetyllysine" evidence="1">
    <location>
        <position position="57"/>
    </location>
</feature>
<feature type="modified residue" description="N6-acetyllysine" evidence="1">
    <location>
        <position position="65"/>
    </location>
</feature>
<feature type="modified residue" description="N6,N6,N6-trimethyllysine; alternate" evidence="1">
    <location>
        <position position="80"/>
    </location>
</feature>
<feature type="modified residue" description="N6,N6-dimethyllysine; alternate" evidence="1">
    <location>
        <position position="80"/>
    </location>
</feature>
<feature type="modified residue" description="N6-methyllysine; alternate" evidence="1">
    <location>
        <position position="80"/>
    </location>
</feature>
<feature type="strand" evidence="7">
    <location>
        <begin position="7"/>
        <end position="9"/>
    </location>
</feature>
<feature type="strand" evidence="6">
    <location>
        <begin position="128"/>
        <end position="131"/>
    </location>
</feature>
<sequence length="136" mass="15357">MARTKQTARKSTGGKAPRKQLASKAARKAAPATGGVKKPHRYRPGTVALREIRRYQKSTELLIRKLPFQRLVREIAQDFKTDLRFQSSAIGALQEAVEAYLVSLFEDTNLCAIHGKRVTIQPKDMQLARRLRGERS</sequence>
<organism>
    <name type="scientific">Schizosaccharomyces pombe (strain 972 / ATCC 24843)</name>
    <name type="common">Fission yeast</name>
    <dbReference type="NCBI Taxonomy" id="284812"/>
    <lineage>
        <taxon>Eukaryota</taxon>
        <taxon>Fungi</taxon>
        <taxon>Dikarya</taxon>
        <taxon>Ascomycota</taxon>
        <taxon>Taphrinomycotina</taxon>
        <taxon>Schizosaccharomycetes</taxon>
        <taxon>Schizosaccharomycetales</taxon>
        <taxon>Schizosaccharomycetaceae</taxon>
        <taxon>Schizosaccharomyces</taxon>
    </lineage>
</organism>
<name>H31_SCHPO</name>
<comment type="function">
    <text>Core component of nucleosome. Nucleosomes wrap and compact DNA into chromatin, limiting DNA accessibility to the cellular machineries which require DNA as a template. Histones thereby play a central role in transcription regulation, DNA repair, DNA replication and chromosomal stability. DNA accessibility is regulated via a complex set of post-translational modifications of histones, also called histone code, and nucleosome remodeling.</text>
</comment>
<comment type="subunit">
    <text>The nucleosome is a histone octamer containing two molecules each of H2A, H2B, H3 and H4 assembled in one H3-H4 heterotetramer and two H2A-H2B heterodimers. The octamer wraps approximately 147 bp of DNA.</text>
</comment>
<comment type="subcellular location">
    <subcellularLocation>
        <location evidence="1">Nucleus</location>
    </subcellularLocation>
    <subcellularLocation>
        <location evidence="1">Chromosome</location>
    </subcellularLocation>
</comment>
<comment type="PTM">
    <text>Phosphorylated by ark1 to form H3S10ph in a cell cycle-dependent manner during mitosis and meiosis. H3S10ph is also formed by ssp2, promotes subsequent H3K14ac formation by gcn5, and is required for transcriptional activation through TBP recruitment to the promoters. Dephosphorylation is performed by sds21.</text>
</comment>
<comment type="PTM">
    <text evidence="1">Mono-, di- and trimethylated by the COMPASS complex to form H3K4me1/2/3. H3K4me activates gene expression by regulating transcription elongation and plays a role in telomere length maintenance. H3K4me enrichment correlates with transcription levels, and occurs in a 5' to 3' gradient with H3K4me3 enrichment at the 5'-end of genes, shifting to H3K4me2 and then H3K4me1 (By similarity). Methylated by clr4 to form H3K9me1. H3K9me1 represents a specific tag for epigenetic transcriptional repression by recruiting swi6/HP1 to methylated histones. Targeting to histone probably involves clr3 and rik1. Essential for silencing of centromeres and directional switching of the mating type. Methylated by set2 to form H3K36me. H3K36me represses gene expression. Methylated by dot1 to form H3K79me. H3K79me is required for association of SIR proteins with telomeric regions and for telomeric silencing. The COMPASS-mediated formation of H3K4me2/3 and the dot1-mediated formation of H3K79me require H2BK123ub1 (By similarity).</text>
</comment>
<comment type="PTM">
    <text evidence="1">Acetylation of histone H3 leads to transcriptional activation. H3K14ac formation by gcn5 is promoted by H3S10ph. H3K14ac can also be formed by esa1. H3K56ac formation occurs predominantly in newly synthesized H3 molecules during G1, S and G2/M of the cell cycle and may be involved in DNA repair (By similarity).</text>
</comment>
<comment type="similarity">
    <text evidence="5">Belongs to the histone H3 family.</text>
</comment>
<comment type="caution">
    <text evidence="5">To ensure consistency between histone entries, we follow the 'Brno' nomenclature for histone modifications, with positions referring to those used in the literature for the 'closest' model organism. Due to slight variations in histone sequences between organisms and to the presence of initiator methionine in UniProtKB/Swiss-Prot sequences, the actual positions of modified amino acids in the sequence generally differ. In this entry the following conventions are used: H3K4me1/2/3 = mono-, di- and trimethylated Lys-5; H3K9ac = acetylated Lys-10; H3K9me1 = monomethylated Lys-10; H3S10ph = phosphorylated Ser-11; H3K14ac = acetylated Lys-15; H3K14me2 = dimethylated Lys-15; H3K18ac = acetylated Lys-19; H3K18me1 = monomethylated Lys-19; H3K23ac = acetylated Lys-24; H3K23me1 = monomethylated Lys-24; H3K27ac = acetylated Lys-28; H3K27me1/2/3 = mono-, di- and trimethylated Lys-28; H3K36ac = acetylated Lys-37; H3K36me1/2/3 = mono-, di- and trimethylated Lys-37; H3K56ac = acetylated Lys-57; H3K64ac = acetylated Lys-65; H3K79me1/2/3 = mono-, di- and trimethylated Lys-80.</text>
</comment>
<accession>P09988</accession>
<gene>
    <name type="primary">hht1</name>
    <name type="ORF">SPAC1834.04</name>
</gene>
<gene>
    <name type="primary">hht2</name>
    <name type="ORF">pi060</name>
    <name type="ORF">SPBC8D2.04</name>
</gene>
<proteinExistence type="evidence at protein level"/>